<reference key="1">
    <citation type="submission" date="2009-07" db="EMBL/GenBank/DDBJ databases">
        <title>Complete sequence of Pectobacterium carotovorum subsp. carotovorum PC1.</title>
        <authorList>
            <consortium name="US DOE Joint Genome Institute"/>
            <person name="Lucas S."/>
            <person name="Copeland A."/>
            <person name="Lapidus A."/>
            <person name="Glavina del Rio T."/>
            <person name="Tice H."/>
            <person name="Bruce D."/>
            <person name="Goodwin L."/>
            <person name="Pitluck S."/>
            <person name="Munk A.C."/>
            <person name="Brettin T."/>
            <person name="Detter J.C."/>
            <person name="Han C."/>
            <person name="Tapia R."/>
            <person name="Larimer F."/>
            <person name="Land M."/>
            <person name="Hauser L."/>
            <person name="Kyrpides N."/>
            <person name="Mikhailova N."/>
            <person name="Balakrishnan V."/>
            <person name="Glasner J."/>
            <person name="Perna N.T."/>
        </authorList>
    </citation>
    <scope>NUCLEOTIDE SEQUENCE [LARGE SCALE GENOMIC DNA]</scope>
    <source>
        <strain>PC1</strain>
    </source>
</reference>
<proteinExistence type="inferred from homology"/>
<protein>
    <recommendedName>
        <fullName evidence="1">Ribosome rescue factor SmrB</fullName>
        <ecNumber evidence="1">3.1.-.-</ecNumber>
    </recommendedName>
</protein>
<feature type="chain" id="PRO_1000213402" description="Ribosome rescue factor SmrB">
    <location>
        <begin position="1"/>
        <end position="180"/>
    </location>
</feature>
<feature type="domain" description="Smr" evidence="1">
    <location>
        <begin position="98"/>
        <end position="173"/>
    </location>
</feature>
<sequence length="180" mass="20433">MSNKYSLNDDELQLFRTSITGTKKLRQDTYTHKPLRRKIGELPAKRALQEQVDASFYFSDEFQPQLDAEGPTRYVRPGASHYELKKLRRGDYSPELFLDLHGLTQLQAKQELGALLAACRREHVYCACVMHGHGKHILKQQTPLWLAQHPDVLAFHQAPKEFGGNAALLVLVALEAPSLE</sequence>
<keyword id="KW-0255">Endonuclease</keyword>
<keyword id="KW-0378">Hydrolase</keyword>
<keyword id="KW-0540">Nuclease</keyword>
<keyword id="KW-0694">RNA-binding</keyword>
<keyword id="KW-0699">rRNA-binding</keyword>
<name>SMRB_PECCP</name>
<gene>
    <name evidence="1" type="primary">smrB</name>
    <name type="ordered locus">PC1_2813</name>
</gene>
<evidence type="ECO:0000255" key="1">
    <source>
        <dbReference type="HAMAP-Rule" id="MF_01042"/>
    </source>
</evidence>
<accession>C6DA87</accession>
<dbReference type="EC" id="3.1.-.-" evidence="1"/>
<dbReference type="EMBL" id="CP001657">
    <property type="protein sequence ID" value="ACT13843.1"/>
    <property type="molecule type" value="Genomic_DNA"/>
</dbReference>
<dbReference type="RefSeq" id="WP_014699114.1">
    <property type="nucleotide sequence ID" value="NC_012917.1"/>
</dbReference>
<dbReference type="SMR" id="C6DA87"/>
<dbReference type="STRING" id="561230.PC1_2813"/>
<dbReference type="GeneID" id="67793302"/>
<dbReference type="KEGG" id="pct:PC1_2813"/>
<dbReference type="eggNOG" id="COG2840">
    <property type="taxonomic scope" value="Bacteria"/>
</dbReference>
<dbReference type="HOGENOM" id="CLU_055978_4_0_6"/>
<dbReference type="OrthoDB" id="5795446at2"/>
<dbReference type="Proteomes" id="UP000002736">
    <property type="component" value="Chromosome"/>
</dbReference>
<dbReference type="GO" id="GO:0004521">
    <property type="term" value="F:RNA endonuclease activity"/>
    <property type="evidence" value="ECO:0007669"/>
    <property type="project" value="UniProtKB-UniRule"/>
</dbReference>
<dbReference type="GO" id="GO:0019843">
    <property type="term" value="F:rRNA binding"/>
    <property type="evidence" value="ECO:0007669"/>
    <property type="project" value="UniProtKB-UniRule"/>
</dbReference>
<dbReference type="GO" id="GO:0072344">
    <property type="term" value="P:rescue of stalled ribosome"/>
    <property type="evidence" value="ECO:0007669"/>
    <property type="project" value="UniProtKB-UniRule"/>
</dbReference>
<dbReference type="Gene3D" id="3.30.1370.110">
    <property type="match status" value="1"/>
</dbReference>
<dbReference type="HAMAP" id="MF_01042">
    <property type="entry name" value="SmrB"/>
    <property type="match status" value="1"/>
</dbReference>
<dbReference type="InterPro" id="IPR002625">
    <property type="entry name" value="Smr_dom"/>
</dbReference>
<dbReference type="InterPro" id="IPR036063">
    <property type="entry name" value="Smr_dom_sf"/>
</dbReference>
<dbReference type="InterPro" id="IPR022990">
    <property type="entry name" value="SmrB-like"/>
</dbReference>
<dbReference type="NCBIfam" id="NF003432">
    <property type="entry name" value="PRK04946.1"/>
    <property type="match status" value="1"/>
</dbReference>
<dbReference type="PANTHER" id="PTHR35562">
    <property type="entry name" value="DNA ENDONUCLEASE SMRA-RELATED"/>
    <property type="match status" value="1"/>
</dbReference>
<dbReference type="PANTHER" id="PTHR35562:SF1">
    <property type="entry name" value="UPF0115 PROTEIN YFCN"/>
    <property type="match status" value="1"/>
</dbReference>
<dbReference type="Pfam" id="PF01713">
    <property type="entry name" value="Smr"/>
    <property type="match status" value="1"/>
</dbReference>
<dbReference type="SMART" id="SM00463">
    <property type="entry name" value="SMR"/>
    <property type="match status" value="1"/>
</dbReference>
<dbReference type="SUPFAM" id="SSF160443">
    <property type="entry name" value="SMR domain-like"/>
    <property type="match status" value="1"/>
</dbReference>
<dbReference type="PROSITE" id="PS50828">
    <property type="entry name" value="SMR"/>
    <property type="match status" value="1"/>
</dbReference>
<comment type="function">
    <text evidence="1">Acts as a ribosome collision sensor. Detects stalled/collided disomes (pairs of ribosomes where the leading ribosome is stalled and a second ribosome has collided with it) and endonucleolytically cleaves mRNA at the 5' boundary of the stalled ribosome. Stalled/collided disomes form a new interface (primarily via the 30S subunits) that binds SmrB. Cleaved mRNA becomes available for tmRNA ligation, leading to ribosomal subunit dissociation and rescue of stalled ribosomes.</text>
</comment>
<comment type="subunit">
    <text evidence="1">Associates with collided ribosomes, but not with correctly translating polysomes.</text>
</comment>
<comment type="similarity">
    <text evidence="1">Belongs to the SmrB family.</text>
</comment>
<organism>
    <name type="scientific">Pectobacterium carotovorum subsp. carotovorum (strain PC1)</name>
    <dbReference type="NCBI Taxonomy" id="561230"/>
    <lineage>
        <taxon>Bacteria</taxon>
        <taxon>Pseudomonadati</taxon>
        <taxon>Pseudomonadota</taxon>
        <taxon>Gammaproteobacteria</taxon>
        <taxon>Enterobacterales</taxon>
        <taxon>Pectobacteriaceae</taxon>
        <taxon>Pectobacterium</taxon>
    </lineage>
</organism>